<evidence type="ECO:0000250" key="1"/>
<evidence type="ECO:0000255" key="2">
    <source>
        <dbReference type="HAMAP-Rule" id="MF_01109"/>
    </source>
</evidence>
<accession>A1VEP9</accession>
<proteinExistence type="inferred from homology"/>
<sequence length="300" mass="33900">MPKHFTRIRDLGFEGAWKVLERAKEMKDTGYRGRTLEGKVATLIFEKASTRTRISFEVAVRHLGGTTIFMTPAESQLGRSEPLRDTARVISRYTDCMIVRTFGQAKIDELASFGSIPVVNALTDEGHPCQVMSDVLTMYERTPDLSQVRVAWIGDGNNMANSWIEAAMYFPFELFMAFPEGYEPDRQLLGLALEAGAKIFLTRDPHMAIDGAHYVNTDVWASMGQEEEQKRREAAFKGFCIDGALMGRAHPDAKFMHCLPAHRGEEVTDEVMESPASIVWDQAENRLHMQKAILEWVFTE</sequence>
<keyword id="KW-0028">Amino-acid biosynthesis</keyword>
<keyword id="KW-0055">Arginine biosynthesis</keyword>
<keyword id="KW-0963">Cytoplasm</keyword>
<keyword id="KW-0808">Transferase</keyword>
<dbReference type="EC" id="2.1.3.3" evidence="2"/>
<dbReference type="EMBL" id="CP000527">
    <property type="protein sequence ID" value="ABM28915.1"/>
    <property type="molecule type" value="Genomic_DNA"/>
</dbReference>
<dbReference type="RefSeq" id="WP_010938395.1">
    <property type="nucleotide sequence ID" value="NC_008751.1"/>
</dbReference>
<dbReference type="SMR" id="A1VEP9"/>
<dbReference type="KEGG" id="dvl:Dvul_1899"/>
<dbReference type="HOGENOM" id="CLU_043846_3_2_7"/>
<dbReference type="UniPathway" id="UPA00068">
    <property type="reaction ID" value="UER00112"/>
</dbReference>
<dbReference type="Proteomes" id="UP000009173">
    <property type="component" value="Chromosome"/>
</dbReference>
<dbReference type="GO" id="GO:0005737">
    <property type="term" value="C:cytoplasm"/>
    <property type="evidence" value="ECO:0007669"/>
    <property type="project" value="UniProtKB-SubCell"/>
</dbReference>
<dbReference type="GO" id="GO:0016597">
    <property type="term" value="F:amino acid binding"/>
    <property type="evidence" value="ECO:0007669"/>
    <property type="project" value="InterPro"/>
</dbReference>
<dbReference type="GO" id="GO:0004585">
    <property type="term" value="F:ornithine carbamoyltransferase activity"/>
    <property type="evidence" value="ECO:0007669"/>
    <property type="project" value="UniProtKB-UniRule"/>
</dbReference>
<dbReference type="GO" id="GO:0042450">
    <property type="term" value="P:arginine biosynthetic process via ornithine"/>
    <property type="evidence" value="ECO:0007669"/>
    <property type="project" value="TreeGrafter"/>
</dbReference>
<dbReference type="GO" id="GO:0019240">
    <property type="term" value="P:citrulline biosynthetic process"/>
    <property type="evidence" value="ECO:0007669"/>
    <property type="project" value="TreeGrafter"/>
</dbReference>
<dbReference type="GO" id="GO:0006526">
    <property type="term" value="P:L-arginine biosynthetic process"/>
    <property type="evidence" value="ECO:0007669"/>
    <property type="project" value="UniProtKB-UniRule"/>
</dbReference>
<dbReference type="FunFam" id="3.40.50.1370:FF:000008">
    <property type="entry name" value="Ornithine carbamoyltransferase"/>
    <property type="match status" value="1"/>
</dbReference>
<dbReference type="Gene3D" id="3.40.50.1370">
    <property type="entry name" value="Aspartate/ornithine carbamoyltransferase"/>
    <property type="match status" value="2"/>
</dbReference>
<dbReference type="HAMAP" id="MF_01109">
    <property type="entry name" value="OTCase"/>
    <property type="match status" value="1"/>
</dbReference>
<dbReference type="InterPro" id="IPR006132">
    <property type="entry name" value="Asp/Orn_carbamoyltranf_P-bd"/>
</dbReference>
<dbReference type="InterPro" id="IPR006130">
    <property type="entry name" value="Asp/Orn_carbamoylTrfase"/>
</dbReference>
<dbReference type="InterPro" id="IPR036901">
    <property type="entry name" value="Asp/Orn_carbamoylTrfase_sf"/>
</dbReference>
<dbReference type="InterPro" id="IPR006131">
    <property type="entry name" value="Asp_carbamoyltransf_Asp/Orn-bd"/>
</dbReference>
<dbReference type="InterPro" id="IPR002292">
    <property type="entry name" value="Orn/put_carbamltrans"/>
</dbReference>
<dbReference type="InterPro" id="IPR024904">
    <property type="entry name" value="OTCase_ArgI"/>
</dbReference>
<dbReference type="NCBIfam" id="TIGR00658">
    <property type="entry name" value="orni_carb_tr"/>
    <property type="match status" value="1"/>
</dbReference>
<dbReference type="NCBIfam" id="NF001986">
    <property type="entry name" value="PRK00779.1"/>
    <property type="match status" value="1"/>
</dbReference>
<dbReference type="PANTHER" id="PTHR45753">
    <property type="entry name" value="ORNITHINE CARBAMOYLTRANSFERASE, MITOCHONDRIAL"/>
    <property type="match status" value="1"/>
</dbReference>
<dbReference type="PANTHER" id="PTHR45753:SF3">
    <property type="entry name" value="ORNITHINE TRANSCARBAMYLASE, MITOCHONDRIAL"/>
    <property type="match status" value="1"/>
</dbReference>
<dbReference type="Pfam" id="PF00185">
    <property type="entry name" value="OTCace"/>
    <property type="match status" value="1"/>
</dbReference>
<dbReference type="Pfam" id="PF02729">
    <property type="entry name" value="OTCace_N"/>
    <property type="match status" value="1"/>
</dbReference>
<dbReference type="PRINTS" id="PR00100">
    <property type="entry name" value="AOTCASE"/>
</dbReference>
<dbReference type="PRINTS" id="PR00102">
    <property type="entry name" value="OTCASE"/>
</dbReference>
<dbReference type="SUPFAM" id="SSF53671">
    <property type="entry name" value="Aspartate/ornithine carbamoyltransferase"/>
    <property type="match status" value="1"/>
</dbReference>
<dbReference type="PROSITE" id="PS00097">
    <property type="entry name" value="CARBAMOYLTRANSFERASE"/>
    <property type="match status" value="1"/>
</dbReference>
<gene>
    <name evidence="2" type="primary">argF</name>
    <name type="ordered locus">Dvul_1899</name>
</gene>
<name>OTC_NITV4</name>
<feature type="chain" id="PRO_1000084842" description="Ornithine carbamoyltransferase">
    <location>
        <begin position="1"/>
        <end position="300"/>
    </location>
</feature>
<feature type="binding site" evidence="2">
    <location>
        <begin position="49"/>
        <end position="52"/>
    </location>
    <ligand>
        <name>carbamoyl phosphate</name>
        <dbReference type="ChEBI" id="CHEBI:58228"/>
    </ligand>
</feature>
<feature type="binding site" evidence="2">
    <location>
        <position position="76"/>
    </location>
    <ligand>
        <name>carbamoyl phosphate</name>
        <dbReference type="ChEBI" id="CHEBI:58228"/>
    </ligand>
</feature>
<feature type="binding site" evidence="2">
    <location>
        <position position="100"/>
    </location>
    <ligand>
        <name>carbamoyl phosphate</name>
        <dbReference type="ChEBI" id="CHEBI:58228"/>
    </ligand>
</feature>
<feature type="binding site" evidence="2">
    <location>
        <begin position="127"/>
        <end position="130"/>
    </location>
    <ligand>
        <name>carbamoyl phosphate</name>
        <dbReference type="ChEBI" id="CHEBI:58228"/>
    </ligand>
</feature>
<feature type="binding site" evidence="2">
    <location>
        <position position="158"/>
    </location>
    <ligand>
        <name>L-ornithine</name>
        <dbReference type="ChEBI" id="CHEBI:46911"/>
    </ligand>
</feature>
<feature type="binding site" evidence="2">
    <location>
        <position position="218"/>
    </location>
    <ligand>
        <name>L-ornithine</name>
        <dbReference type="ChEBI" id="CHEBI:46911"/>
    </ligand>
</feature>
<feature type="binding site" evidence="2">
    <location>
        <begin position="222"/>
        <end position="223"/>
    </location>
    <ligand>
        <name>L-ornithine</name>
        <dbReference type="ChEBI" id="CHEBI:46911"/>
    </ligand>
</feature>
<feature type="binding site" evidence="2">
    <location>
        <begin position="258"/>
        <end position="259"/>
    </location>
    <ligand>
        <name>carbamoyl phosphate</name>
        <dbReference type="ChEBI" id="CHEBI:58228"/>
    </ligand>
</feature>
<feature type="binding site" evidence="2">
    <location>
        <position position="286"/>
    </location>
    <ligand>
        <name>carbamoyl phosphate</name>
        <dbReference type="ChEBI" id="CHEBI:58228"/>
    </ligand>
</feature>
<comment type="function">
    <text evidence="1">Reversibly catalyzes the transfer of the carbamoyl group from carbamoyl phosphate (CP) to the N(epsilon) atom of ornithine (ORN) to produce L-citrulline.</text>
</comment>
<comment type="catalytic activity">
    <reaction evidence="2">
        <text>carbamoyl phosphate + L-ornithine = L-citrulline + phosphate + H(+)</text>
        <dbReference type="Rhea" id="RHEA:19513"/>
        <dbReference type="ChEBI" id="CHEBI:15378"/>
        <dbReference type="ChEBI" id="CHEBI:43474"/>
        <dbReference type="ChEBI" id="CHEBI:46911"/>
        <dbReference type="ChEBI" id="CHEBI:57743"/>
        <dbReference type="ChEBI" id="CHEBI:58228"/>
        <dbReference type="EC" id="2.1.3.3"/>
    </reaction>
</comment>
<comment type="pathway">
    <text evidence="2">Amino-acid biosynthesis; L-arginine biosynthesis; L-arginine from L-ornithine and carbamoyl phosphate: step 1/3.</text>
</comment>
<comment type="subcellular location">
    <subcellularLocation>
        <location evidence="2">Cytoplasm</location>
    </subcellularLocation>
</comment>
<comment type="similarity">
    <text evidence="2">Belongs to the aspartate/ornithine carbamoyltransferase superfamily. OTCase family.</text>
</comment>
<protein>
    <recommendedName>
        <fullName evidence="2">Ornithine carbamoyltransferase</fullName>
        <shortName evidence="2">OTCase</shortName>
        <ecNumber evidence="2">2.1.3.3</ecNumber>
    </recommendedName>
</protein>
<reference key="1">
    <citation type="journal article" date="2009" name="Environ. Microbiol.">
        <title>Contribution of mobile genetic elements to Desulfovibrio vulgaris genome plasticity.</title>
        <authorList>
            <person name="Walker C.B."/>
            <person name="Stolyar S."/>
            <person name="Chivian D."/>
            <person name="Pinel N."/>
            <person name="Gabster J.A."/>
            <person name="Dehal P.S."/>
            <person name="He Z."/>
            <person name="Yang Z.K."/>
            <person name="Yen H.C."/>
            <person name="Zhou J."/>
            <person name="Wall J.D."/>
            <person name="Hazen T.C."/>
            <person name="Arkin A.P."/>
            <person name="Stahl D.A."/>
        </authorList>
    </citation>
    <scope>NUCLEOTIDE SEQUENCE [LARGE SCALE GENOMIC DNA]</scope>
    <source>
        <strain>DP4</strain>
    </source>
</reference>
<organism>
    <name type="scientific">Nitratidesulfovibrio vulgaris (strain DP4)</name>
    <name type="common">Desulfovibrio vulgaris</name>
    <dbReference type="NCBI Taxonomy" id="391774"/>
    <lineage>
        <taxon>Bacteria</taxon>
        <taxon>Pseudomonadati</taxon>
        <taxon>Thermodesulfobacteriota</taxon>
        <taxon>Desulfovibrionia</taxon>
        <taxon>Desulfovibrionales</taxon>
        <taxon>Desulfovibrionaceae</taxon>
        <taxon>Nitratidesulfovibrio</taxon>
    </lineage>
</organism>